<protein>
    <recommendedName>
        <fullName evidence="1">Translational regulator CsrA</fullName>
    </recommendedName>
    <alternativeName>
        <fullName evidence="1">Carbon storage regulator</fullName>
    </alternativeName>
</protein>
<reference key="1">
    <citation type="journal article" date="2008" name="J. Bacteriol.">
        <title>Comparative genome sequence analysis of multidrug-resistant Acinetobacter baumannii.</title>
        <authorList>
            <person name="Adams M.D."/>
            <person name="Goglin K."/>
            <person name="Molyneaux N."/>
            <person name="Hujer K.M."/>
            <person name="Lavender H."/>
            <person name="Jamison J.J."/>
            <person name="MacDonald I.J."/>
            <person name="Martin K.M."/>
            <person name="Russo T."/>
            <person name="Campagnari A.A."/>
            <person name="Hujer A.M."/>
            <person name="Bonomo R.A."/>
            <person name="Gill S.R."/>
        </authorList>
    </citation>
    <scope>NUCLEOTIDE SEQUENCE [LARGE SCALE GENOMIC DNA]</scope>
    <source>
        <strain>AB307-0294</strain>
    </source>
</reference>
<comment type="function">
    <text evidence="1">A key translational regulator that binds mRNA to regulate translation initiation and/or mRNA stability. Mediates global changes in gene expression, shifting from rapid growth to stress survival by linking envelope stress, the stringent response and the catabolite repression systems. Usually binds in the 5'-UTR; binding at or near the Shine-Dalgarno sequence prevents ribosome-binding, repressing translation, binding elsewhere in the 5'-UTR can activate translation and/or stabilize the mRNA. Its function is antagonized by small RNA(s).</text>
</comment>
<comment type="subunit">
    <text evidence="1">Homodimer; the beta-strands of each monomer intercalate to form a hydrophobic core, while the alpha-helices form wings that extend away from the core.</text>
</comment>
<comment type="subcellular location">
    <subcellularLocation>
        <location evidence="1">Cytoplasm</location>
    </subcellularLocation>
</comment>
<comment type="similarity">
    <text evidence="1">Belongs to the CsrA/RsmA family.</text>
</comment>
<dbReference type="EMBL" id="CP001172">
    <property type="protein sequence ID" value="ACJ58091.1"/>
    <property type="molecule type" value="Genomic_DNA"/>
</dbReference>
<dbReference type="RefSeq" id="WP_000906487.1">
    <property type="nucleotide sequence ID" value="NZ_CP001172.1"/>
</dbReference>
<dbReference type="SMR" id="B7GWX6"/>
<dbReference type="GeneID" id="92893212"/>
<dbReference type="HOGENOM" id="CLU_164837_2_1_6"/>
<dbReference type="Proteomes" id="UP000006924">
    <property type="component" value="Chromosome"/>
</dbReference>
<dbReference type="GO" id="GO:0005829">
    <property type="term" value="C:cytosol"/>
    <property type="evidence" value="ECO:0007669"/>
    <property type="project" value="TreeGrafter"/>
</dbReference>
<dbReference type="GO" id="GO:0048027">
    <property type="term" value="F:mRNA 5'-UTR binding"/>
    <property type="evidence" value="ECO:0007669"/>
    <property type="project" value="UniProtKB-UniRule"/>
</dbReference>
<dbReference type="GO" id="GO:0006402">
    <property type="term" value="P:mRNA catabolic process"/>
    <property type="evidence" value="ECO:0007669"/>
    <property type="project" value="InterPro"/>
</dbReference>
<dbReference type="GO" id="GO:0045947">
    <property type="term" value="P:negative regulation of translational initiation"/>
    <property type="evidence" value="ECO:0007669"/>
    <property type="project" value="UniProtKB-UniRule"/>
</dbReference>
<dbReference type="GO" id="GO:0045948">
    <property type="term" value="P:positive regulation of translational initiation"/>
    <property type="evidence" value="ECO:0007669"/>
    <property type="project" value="UniProtKB-UniRule"/>
</dbReference>
<dbReference type="GO" id="GO:0006109">
    <property type="term" value="P:regulation of carbohydrate metabolic process"/>
    <property type="evidence" value="ECO:0007669"/>
    <property type="project" value="UniProtKB-UniRule"/>
</dbReference>
<dbReference type="FunFam" id="2.60.40.4380:FF:000001">
    <property type="entry name" value="Translational regulator CsrA"/>
    <property type="match status" value="1"/>
</dbReference>
<dbReference type="Gene3D" id="2.60.40.4380">
    <property type="entry name" value="Translational regulator CsrA"/>
    <property type="match status" value="1"/>
</dbReference>
<dbReference type="HAMAP" id="MF_00167">
    <property type="entry name" value="CsrA"/>
    <property type="match status" value="1"/>
</dbReference>
<dbReference type="InterPro" id="IPR003751">
    <property type="entry name" value="CsrA"/>
</dbReference>
<dbReference type="InterPro" id="IPR036107">
    <property type="entry name" value="CsrA_sf"/>
</dbReference>
<dbReference type="NCBIfam" id="TIGR00202">
    <property type="entry name" value="csrA"/>
    <property type="match status" value="1"/>
</dbReference>
<dbReference type="NCBIfam" id="NF002469">
    <property type="entry name" value="PRK01712.1"/>
    <property type="match status" value="1"/>
</dbReference>
<dbReference type="PANTHER" id="PTHR34984">
    <property type="entry name" value="CARBON STORAGE REGULATOR"/>
    <property type="match status" value="1"/>
</dbReference>
<dbReference type="PANTHER" id="PTHR34984:SF1">
    <property type="entry name" value="CARBON STORAGE REGULATOR"/>
    <property type="match status" value="1"/>
</dbReference>
<dbReference type="Pfam" id="PF02599">
    <property type="entry name" value="CsrA"/>
    <property type="match status" value="1"/>
</dbReference>
<dbReference type="SUPFAM" id="SSF117130">
    <property type="entry name" value="CsrA-like"/>
    <property type="match status" value="1"/>
</dbReference>
<feature type="chain" id="PRO_1000118228" description="Translational regulator CsrA">
    <location>
        <begin position="1"/>
        <end position="84"/>
    </location>
</feature>
<accession>B7GWX6</accession>
<keyword id="KW-0010">Activator</keyword>
<keyword id="KW-0963">Cytoplasm</keyword>
<keyword id="KW-0678">Repressor</keyword>
<keyword id="KW-0694">RNA-binding</keyword>
<keyword id="KW-0810">Translation regulation</keyword>
<evidence type="ECO:0000255" key="1">
    <source>
        <dbReference type="HAMAP-Rule" id="MF_00167"/>
    </source>
</evidence>
<gene>
    <name evidence="1" type="primary">csrA</name>
    <name type="ordered locus">ABBFA_002405</name>
</gene>
<organism>
    <name type="scientific">Acinetobacter baumannii (strain AB307-0294)</name>
    <dbReference type="NCBI Taxonomy" id="557600"/>
    <lineage>
        <taxon>Bacteria</taxon>
        <taxon>Pseudomonadati</taxon>
        <taxon>Pseudomonadota</taxon>
        <taxon>Gammaproteobacteria</taxon>
        <taxon>Moraxellales</taxon>
        <taxon>Moraxellaceae</taxon>
        <taxon>Acinetobacter</taxon>
        <taxon>Acinetobacter calcoaceticus/baumannii complex</taxon>
    </lineage>
</organism>
<proteinExistence type="inferred from homology"/>
<sequence length="84" mass="9846">MLILTRRVGETLMIGDQVSVTVLGVKGNQVRIGVNAPKEVSVHREEIYQRIQHERAMHEHLQHLDQDYQVSYEDDNYAQKNFNR</sequence>
<name>CSRA_ACIB3</name>